<organism>
    <name type="scientific">Eremothecium gossypii (strain ATCC 10895 / CBS 109.51 / FGSC 9923 / NRRL Y-1056)</name>
    <name type="common">Yeast</name>
    <name type="synonym">Ashbya gossypii</name>
    <dbReference type="NCBI Taxonomy" id="284811"/>
    <lineage>
        <taxon>Eukaryota</taxon>
        <taxon>Fungi</taxon>
        <taxon>Dikarya</taxon>
        <taxon>Ascomycota</taxon>
        <taxon>Saccharomycotina</taxon>
        <taxon>Saccharomycetes</taxon>
        <taxon>Saccharomycetales</taxon>
        <taxon>Saccharomycetaceae</taxon>
        <taxon>Eremothecium</taxon>
    </lineage>
</organism>
<comment type="function">
    <text evidence="1">Non-catalytic component of the H/ACA small nucleolar ribonucleoprotein (H/ACA snoRNP), which catalyzes pseudouridylation of rRNA and is required for ribosome biogenesis. This involves the isomerization of uridine such that the ribose is subsequently attached to C5, instead of the normal N1. Pseudouridine ('psi') residues may serve to stabilize the conformation of rRNAs. The H/ACA snoRNP complex also mediates pseudouridylation of other types of RNAs. The H/ACA snoRNP complex mediates pseudouridylation at position 93 in U2 snRNA.</text>
</comment>
<comment type="subunit">
    <text evidence="1">Component of the small nucleolar ribonucleoprotein particles containing H/ACA-type snoRNAs (H/ACA snoRNPs).</text>
</comment>
<comment type="subcellular location">
    <subcellularLocation>
        <location evidence="1">Nucleus</location>
        <location evidence="1">Nucleolus</location>
    </subcellularLocation>
</comment>
<comment type="similarity">
    <text evidence="3">Belongs to the GAR1 family.</text>
</comment>
<gene>
    <name type="primary">GAR1</name>
    <name type="ordered locus">AEL096W</name>
</gene>
<keyword id="KW-0539">Nucleus</keyword>
<keyword id="KW-1185">Reference proteome</keyword>
<keyword id="KW-0677">Repeat</keyword>
<keyword id="KW-0687">Ribonucleoprotein</keyword>
<keyword id="KW-0690">Ribosome biogenesis</keyword>
<keyword id="KW-0694">RNA-binding</keyword>
<keyword id="KW-0698">rRNA processing</keyword>
<feature type="chain" id="PRO_0000208562" description="H/ACA ribonucleoprotein complex subunit GAR1">
    <location>
        <begin position="1"/>
        <end position="212"/>
    </location>
</feature>
<feature type="region of interest" description="Disordered" evidence="2">
    <location>
        <begin position="1"/>
        <end position="32"/>
    </location>
</feature>
<feature type="region of interest" description="RGG-box 1">
    <location>
        <begin position="8"/>
        <end position="27"/>
    </location>
</feature>
<feature type="region of interest" description="Disordered" evidence="2">
    <location>
        <begin position="124"/>
        <end position="212"/>
    </location>
</feature>
<feature type="region of interest" description="RGG-box 2">
    <location>
        <begin position="145"/>
        <end position="209"/>
    </location>
</feature>
<feature type="compositionally biased region" description="Gly residues" evidence="2">
    <location>
        <begin position="7"/>
        <end position="27"/>
    </location>
</feature>
<feature type="compositionally biased region" description="Gly residues" evidence="2">
    <location>
        <begin position="143"/>
        <end position="206"/>
    </location>
</feature>
<dbReference type="EMBL" id="AE016818">
    <property type="protein sequence ID" value="AAS52589.1"/>
    <property type="molecule type" value="Genomic_DNA"/>
</dbReference>
<dbReference type="RefSeq" id="NP_984765.1">
    <property type="nucleotide sequence ID" value="NM_210119.1"/>
</dbReference>
<dbReference type="SMR" id="Q757V8"/>
<dbReference type="FunCoup" id="Q757V8">
    <property type="interactions" value="655"/>
</dbReference>
<dbReference type="STRING" id="284811.Q757V8"/>
<dbReference type="EnsemblFungi" id="AAS52589">
    <property type="protein sequence ID" value="AAS52589"/>
    <property type="gene ID" value="AGOS_AEL096W"/>
</dbReference>
<dbReference type="GeneID" id="4620955"/>
<dbReference type="KEGG" id="ago:AGOS_AEL096W"/>
<dbReference type="eggNOG" id="KOG3262">
    <property type="taxonomic scope" value="Eukaryota"/>
</dbReference>
<dbReference type="HOGENOM" id="CLU_080002_1_0_1"/>
<dbReference type="InParanoid" id="Q757V8"/>
<dbReference type="OMA" id="KPQDGIV"/>
<dbReference type="OrthoDB" id="2187159at2759"/>
<dbReference type="Proteomes" id="UP000000591">
    <property type="component" value="Chromosome V"/>
</dbReference>
<dbReference type="GO" id="GO:0031429">
    <property type="term" value="C:box H/ACA snoRNP complex"/>
    <property type="evidence" value="ECO:0000318"/>
    <property type="project" value="GO_Central"/>
</dbReference>
<dbReference type="GO" id="GO:0034513">
    <property type="term" value="F:box H/ACA snoRNA binding"/>
    <property type="evidence" value="ECO:0000318"/>
    <property type="project" value="GO_Central"/>
</dbReference>
<dbReference type="GO" id="GO:0000454">
    <property type="term" value="P:snoRNA guided rRNA pseudouridine synthesis"/>
    <property type="evidence" value="ECO:0000318"/>
    <property type="project" value="GO_Central"/>
</dbReference>
<dbReference type="GO" id="GO:0031120">
    <property type="term" value="P:snRNA pseudouridine synthesis"/>
    <property type="evidence" value="ECO:0007669"/>
    <property type="project" value="EnsemblFungi"/>
</dbReference>
<dbReference type="FunFam" id="2.40.10.230:FF:000001">
    <property type="entry name" value="H/ACA ribonucleoprotein complex subunit"/>
    <property type="match status" value="1"/>
</dbReference>
<dbReference type="Gene3D" id="2.40.10.230">
    <property type="entry name" value="Probable tRNA pseudouridine synthase domain"/>
    <property type="match status" value="1"/>
</dbReference>
<dbReference type="InterPro" id="IPR038664">
    <property type="entry name" value="Gar1/Naf1_Cbf5-bd_sf"/>
</dbReference>
<dbReference type="InterPro" id="IPR007504">
    <property type="entry name" value="H/ACA_rnp_Gar1/Naf1"/>
</dbReference>
<dbReference type="InterPro" id="IPR009000">
    <property type="entry name" value="Transl_B-barrel_sf"/>
</dbReference>
<dbReference type="PANTHER" id="PTHR23237:SF6">
    <property type="entry name" value="H_ACA RIBONUCLEOPROTEIN COMPLEX SUBUNIT 1"/>
    <property type="match status" value="1"/>
</dbReference>
<dbReference type="PANTHER" id="PTHR23237">
    <property type="entry name" value="NUCLEOLAR PROTEIN FAMILY A MEMBER 1 SNORNP PROTEIN GAR1"/>
    <property type="match status" value="1"/>
</dbReference>
<dbReference type="Pfam" id="PF04410">
    <property type="entry name" value="Gar1"/>
    <property type="match status" value="1"/>
</dbReference>
<dbReference type="SUPFAM" id="SSF50447">
    <property type="entry name" value="Translation proteins"/>
    <property type="match status" value="1"/>
</dbReference>
<proteinExistence type="inferred from homology"/>
<protein>
    <recommendedName>
        <fullName>H/ACA ribonucleoprotein complex subunit GAR1</fullName>
    </recommendedName>
    <alternativeName>
        <fullName>snoRNP protein GAR1</fullName>
    </alternativeName>
</protein>
<name>GAR1_EREGS</name>
<sequence length="212" mass="21682">MSFRGNSRGGRGGARGGSRGGRGGFGGRQFQQGPPDSVVEMGAFMHDCEGDIVCRSINTKIPYFNAMIYLENKTEVGKVDEILGPLNEVFFTIKCAEGVKASSFKDGDKFYISPEKLLPIERFIPKPKVAGPPKPKRKRAAGGAPGRGGFGGRGGSRGGFGGRGGARGGFGGRGGARGGFGGFGGRGGSRGGFGGRGGARGGSRGGRGGKRF</sequence>
<reference key="1">
    <citation type="journal article" date="2004" name="Science">
        <title>The Ashbya gossypii genome as a tool for mapping the ancient Saccharomyces cerevisiae genome.</title>
        <authorList>
            <person name="Dietrich F.S."/>
            <person name="Voegeli S."/>
            <person name="Brachat S."/>
            <person name="Lerch A."/>
            <person name="Gates K."/>
            <person name="Steiner S."/>
            <person name="Mohr C."/>
            <person name="Poehlmann R."/>
            <person name="Luedi P."/>
            <person name="Choi S."/>
            <person name="Wing R.A."/>
            <person name="Flavier A."/>
            <person name="Gaffney T.D."/>
            <person name="Philippsen P."/>
        </authorList>
    </citation>
    <scope>NUCLEOTIDE SEQUENCE [LARGE SCALE GENOMIC DNA]</scope>
    <source>
        <strain>ATCC 10895 / CBS 109.51 / FGSC 9923 / NRRL Y-1056</strain>
    </source>
</reference>
<reference key="2">
    <citation type="journal article" date="2013" name="G3 (Bethesda)">
        <title>Genomes of Ashbya fungi isolated from insects reveal four mating-type loci, numerous translocations, lack of transposons, and distinct gene duplications.</title>
        <authorList>
            <person name="Dietrich F.S."/>
            <person name="Voegeli S."/>
            <person name="Kuo S."/>
            <person name="Philippsen P."/>
        </authorList>
    </citation>
    <scope>GENOME REANNOTATION</scope>
    <source>
        <strain>ATCC 10895 / CBS 109.51 / FGSC 9923 / NRRL Y-1056</strain>
    </source>
</reference>
<accession>Q757V8</accession>
<evidence type="ECO:0000250" key="1">
    <source>
        <dbReference type="UniProtKB" id="P28007"/>
    </source>
</evidence>
<evidence type="ECO:0000256" key="2">
    <source>
        <dbReference type="SAM" id="MobiDB-lite"/>
    </source>
</evidence>
<evidence type="ECO:0000305" key="3"/>